<keyword id="KW-0067">ATP-binding</keyword>
<keyword id="KW-0173">Coenzyme A biosynthesis</keyword>
<keyword id="KW-0963">Cytoplasm</keyword>
<keyword id="KW-0460">Magnesium</keyword>
<keyword id="KW-0547">Nucleotide-binding</keyword>
<keyword id="KW-0548">Nucleotidyltransferase</keyword>
<keyword id="KW-0808">Transferase</keyword>
<sequence>MIERTALYAGSFDPLTNGHLDVLKASLAVADIVYAAIGIHPGKKPLFSFEERVQLIEDATKAEFGRDGARIKVVAFDGLVIDAARKQGASIMIRGLRDGTDLDYEMQMAGMNETMAPELQTVFLPASPSVRTITATLVRQIASMGGDIRPFVPAAVAGALTAKFAK</sequence>
<name>COAD_RHILO</name>
<feature type="chain" id="PRO_0000156262" description="Phosphopantetheine adenylyltransferase">
    <location>
        <begin position="1"/>
        <end position="166"/>
    </location>
</feature>
<feature type="binding site" evidence="1">
    <location>
        <begin position="11"/>
        <end position="12"/>
    </location>
    <ligand>
        <name>ATP</name>
        <dbReference type="ChEBI" id="CHEBI:30616"/>
    </ligand>
</feature>
<feature type="binding site" evidence="1">
    <location>
        <position position="11"/>
    </location>
    <ligand>
        <name>substrate</name>
    </ligand>
</feature>
<feature type="binding site" evidence="1">
    <location>
        <position position="19"/>
    </location>
    <ligand>
        <name>ATP</name>
        <dbReference type="ChEBI" id="CHEBI:30616"/>
    </ligand>
</feature>
<feature type="binding site" evidence="1">
    <location>
        <position position="43"/>
    </location>
    <ligand>
        <name>substrate</name>
    </ligand>
</feature>
<feature type="binding site" evidence="1">
    <location>
        <position position="80"/>
    </location>
    <ligand>
        <name>substrate</name>
    </ligand>
</feature>
<feature type="binding site" evidence="1">
    <location>
        <position position="94"/>
    </location>
    <ligand>
        <name>substrate</name>
    </ligand>
</feature>
<feature type="binding site" evidence="1">
    <location>
        <begin position="95"/>
        <end position="97"/>
    </location>
    <ligand>
        <name>ATP</name>
        <dbReference type="ChEBI" id="CHEBI:30616"/>
    </ligand>
</feature>
<feature type="binding site" evidence="1">
    <location>
        <position position="105"/>
    </location>
    <ligand>
        <name>ATP</name>
        <dbReference type="ChEBI" id="CHEBI:30616"/>
    </ligand>
</feature>
<feature type="binding site" evidence="1">
    <location>
        <begin position="130"/>
        <end position="136"/>
    </location>
    <ligand>
        <name>ATP</name>
        <dbReference type="ChEBI" id="CHEBI:30616"/>
    </ligand>
</feature>
<feature type="site" description="Transition state stabilizer" evidence="1">
    <location>
        <position position="19"/>
    </location>
</feature>
<comment type="function">
    <text evidence="1">Reversibly transfers an adenylyl group from ATP to 4'-phosphopantetheine, yielding dephospho-CoA (dPCoA) and pyrophosphate.</text>
</comment>
<comment type="catalytic activity">
    <reaction evidence="1">
        <text>(R)-4'-phosphopantetheine + ATP + H(+) = 3'-dephospho-CoA + diphosphate</text>
        <dbReference type="Rhea" id="RHEA:19801"/>
        <dbReference type="ChEBI" id="CHEBI:15378"/>
        <dbReference type="ChEBI" id="CHEBI:30616"/>
        <dbReference type="ChEBI" id="CHEBI:33019"/>
        <dbReference type="ChEBI" id="CHEBI:57328"/>
        <dbReference type="ChEBI" id="CHEBI:61723"/>
        <dbReference type="EC" id="2.7.7.3"/>
    </reaction>
</comment>
<comment type="cofactor">
    <cofactor evidence="1">
        <name>Mg(2+)</name>
        <dbReference type="ChEBI" id="CHEBI:18420"/>
    </cofactor>
</comment>
<comment type="pathway">
    <text evidence="1">Cofactor biosynthesis; coenzyme A biosynthesis; CoA from (R)-pantothenate: step 4/5.</text>
</comment>
<comment type="subunit">
    <text evidence="1">Homohexamer.</text>
</comment>
<comment type="subcellular location">
    <subcellularLocation>
        <location evidence="1">Cytoplasm</location>
    </subcellularLocation>
</comment>
<comment type="similarity">
    <text evidence="1">Belongs to the bacterial CoaD family.</text>
</comment>
<evidence type="ECO:0000255" key="1">
    <source>
        <dbReference type="HAMAP-Rule" id="MF_00151"/>
    </source>
</evidence>
<dbReference type="EC" id="2.7.7.3" evidence="1"/>
<dbReference type="EMBL" id="BA000012">
    <property type="protein sequence ID" value="BAB48262.1"/>
    <property type="molecule type" value="Genomic_DNA"/>
</dbReference>
<dbReference type="RefSeq" id="WP_010909617.1">
    <property type="nucleotide sequence ID" value="NC_002678.2"/>
</dbReference>
<dbReference type="SMR" id="Q98M51"/>
<dbReference type="GeneID" id="66683917"/>
<dbReference type="KEGG" id="mlo:mll0730"/>
<dbReference type="eggNOG" id="COG0669">
    <property type="taxonomic scope" value="Bacteria"/>
</dbReference>
<dbReference type="HOGENOM" id="CLU_100149_0_1_5"/>
<dbReference type="UniPathway" id="UPA00241">
    <property type="reaction ID" value="UER00355"/>
</dbReference>
<dbReference type="Proteomes" id="UP000000552">
    <property type="component" value="Chromosome"/>
</dbReference>
<dbReference type="GO" id="GO:0005737">
    <property type="term" value="C:cytoplasm"/>
    <property type="evidence" value="ECO:0007669"/>
    <property type="project" value="UniProtKB-SubCell"/>
</dbReference>
<dbReference type="GO" id="GO:0005524">
    <property type="term" value="F:ATP binding"/>
    <property type="evidence" value="ECO:0007669"/>
    <property type="project" value="UniProtKB-KW"/>
</dbReference>
<dbReference type="GO" id="GO:0004595">
    <property type="term" value="F:pantetheine-phosphate adenylyltransferase activity"/>
    <property type="evidence" value="ECO:0007669"/>
    <property type="project" value="UniProtKB-UniRule"/>
</dbReference>
<dbReference type="GO" id="GO:0015937">
    <property type="term" value="P:coenzyme A biosynthetic process"/>
    <property type="evidence" value="ECO:0007669"/>
    <property type="project" value="UniProtKB-UniRule"/>
</dbReference>
<dbReference type="CDD" id="cd02163">
    <property type="entry name" value="PPAT"/>
    <property type="match status" value="1"/>
</dbReference>
<dbReference type="Gene3D" id="3.40.50.620">
    <property type="entry name" value="HUPs"/>
    <property type="match status" value="1"/>
</dbReference>
<dbReference type="HAMAP" id="MF_00151">
    <property type="entry name" value="PPAT_bact"/>
    <property type="match status" value="1"/>
</dbReference>
<dbReference type="InterPro" id="IPR004821">
    <property type="entry name" value="Cyt_trans-like"/>
</dbReference>
<dbReference type="InterPro" id="IPR001980">
    <property type="entry name" value="PPAT"/>
</dbReference>
<dbReference type="InterPro" id="IPR014729">
    <property type="entry name" value="Rossmann-like_a/b/a_fold"/>
</dbReference>
<dbReference type="NCBIfam" id="TIGR01510">
    <property type="entry name" value="coaD_prev_kdtB"/>
    <property type="match status" value="1"/>
</dbReference>
<dbReference type="NCBIfam" id="TIGR00125">
    <property type="entry name" value="cyt_tran_rel"/>
    <property type="match status" value="1"/>
</dbReference>
<dbReference type="PANTHER" id="PTHR21342">
    <property type="entry name" value="PHOSPHOPANTETHEINE ADENYLYLTRANSFERASE"/>
    <property type="match status" value="1"/>
</dbReference>
<dbReference type="PANTHER" id="PTHR21342:SF1">
    <property type="entry name" value="PHOSPHOPANTETHEINE ADENYLYLTRANSFERASE"/>
    <property type="match status" value="1"/>
</dbReference>
<dbReference type="Pfam" id="PF01467">
    <property type="entry name" value="CTP_transf_like"/>
    <property type="match status" value="1"/>
</dbReference>
<dbReference type="PRINTS" id="PR01020">
    <property type="entry name" value="LPSBIOSNTHSS"/>
</dbReference>
<dbReference type="SUPFAM" id="SSF52374">
    <property type="entry name" value="Nucleotidylyl transferase"/>
    <property type="match status" value="1"/>
</dbReference>
<proteinExistence type="inferred from homology"/>
<gene>
    <name evidence="1" type="primary">coaD</name>
    <name type="ordered locus">mll0730</name>
</gene>
<accession>Q98M51</accession>
<protein>
    <recommendedName>
        <fullName evidence="1">Phosphopantetheine adenylyltransferase</fullName>
        <ecNumber evidence="1">2.7.7.3</ecNumber>
    </recommendedName>
    <alternativeName>
        <fullName evidence="1">Dephospho-CoA pyrophosphorylase</fullName>
    </alternativeName>
    <alternativeName>
        <fullName evidence="1">Pantetheine-phosphate adenylyltransferase</fullName>
        <shortName evidence="1">PPAT</shortName>
    </alternativeName>
</protein>
<organism>
    <name type="scientific">Mesorhizobium japonicum (strain LMG 29417 / CECT 9101 / MAFF 303099)</name>
    <name type="common">Mesorhizobium loti (strain MAFF 303099)</name>
    <dbReference type="NCBI Taxonomy" id="266835"/>
    <lineage>
        <taxon>Bacteria</taxon>
        <taxon>Pseudomonadati</taxon>
        <taxon>Pseudomonadota</taxon>
        <taxon>Alphaproteobacteria</taxon>
        <taxon>Hyphomicrobiales</taxon>
        <taxon>Phyllobacteriaceae</taxon>
        <taxon>Mesorhizobium</taxon>
    </lineage>
</organism>
<reference key="1">
    <citation type="journal article" date="2000" name="DNA Res.">
        <title>Complete genome structure of the nitrogen-fixing symbiotic bacterium Mesorhizobium loti.</title>
        <authorList>
            <person name="Kaneko T."/>
            <person name="Nakamura Y."/>
            <person name="Sato S."/>
            <person name="Asamizu E."/>
            <person name="Kato T."/>
            <person name="Sasamoto S."/>
            <person name="Watanabe A."/>
            <person name="Idesawa K."/>
            <person name="Ishikawa A."/>
            <person name="Kawashima K."/>
            <person name="Kimura T."/>
            <person name="Kishida Y."/>
            <person name="Kiyokawa C."/>
            <person name="Kohara M."/>
            <person name="Matsumoto M."/>
            <person name="Matsuno A."/>
            <person name="Mochizuki Y."/>
            <person name="Nakayama S."/>
            <person name="Nakazaki N."/>
            <person name="Shimpo S."/>
            <person name="Sugimoto M."/>
            <person name="Takeuchi C."/>
            <person name="Yamada M."/>
            <person name="Tabata S."/>
        </authorList>
    </citation>
    <scope>NUCLEOTIDE SEQUENCE [LARGE SCALE GENOMIC DNA]</scope>
    <source>
        <strain>LMG 29417 / CECT 9101 / MAFF 303099</strain>
    </source>
</reference>